<proteinExistence type="inferred from homology"/>
<organism>
    <name type="scientific">Shewanella piezotolerans (strain WP3 / JCM 13877)</name>
    <dbReference type="NCBI Taxonomy" id="225849"/>
    <lineage>
        <taxon>Bacteria</taxon>
        <taxon>Pseudomonadati</taxon>
        <taxon>Pseudomonadota</taxon>
        <taxon>Gammaproteobacteria</taxon>
        <taxon>Alteromonadales</taxon>
        <taxon>Shewanellaceae</taxon>
        <taxon>Shewanella</taxon>
    </lineage>
</organism>
<name>RSMC_SHEPW</name>
<reference key="1">
    <citation type="journal article" date="2008" name="PLoS ONE">
        <title>Environmental adaptation: genomic analysis of the piezotolerant and psychrotolerant deep-sea iron reducing bacterium Shewanella piezotolerans WP3.</title>
        <authorList>
            <person name="Wang F."/>
            <person name="Wang J."/>
            <person name="Jian H."/>
            <person name="Zhang B."/>
            <person name="Li S."/>
            <person name="Wang F."/>
            <person name="Zeng X."/>
            <person name="Gao L."/>
            <person name="Bartlett D.H."/>
            <person name="Yu J."/>
            <person name="Hu S."/>
            <person name="Xiao X."/>
        </authorList>
    </citation>
    <scope>NUCLEOTIDE SEQUENCE [LARGE SCALE GENOMIC DNA]</scope>
    <source>
        <strain>WP3 / JCM 13877</strain>
    </source>
</reference>
<dbReference type="EC" id="2.1.1.172" evidence="1"/>
<dbReference type="EMBL" id="CP000472">
    <property type="protein sequence ID" value="ACJ31121.1"/>
    <property type="molecule type" value="Genomic_DNA"/>
</dbReference>
<dbReference type="RefSeq" id="WP_020914456.1">
    <property type="nucleotide sequence ID" value="NC_011566.1"/>
</dbReference>
<dbReference type="SMR" id="B8CUC9"/>
<dbReference type="STRING" id="225849.swp_4478"/>
<dbReference type="KEGG" id="swp:swp_4478"/>
<dbReference type="eggNOG" id="COG2813">
    <property type="taxonomic scope" value="Bacteria"/>
</dbReference>
<dbReference type="HOGENOM" id="CLU_049581_0_1_6"/>
<dbReference type="OrthoDB" id="9816072at2"/>
<dbReference type="Proteomes" id="UP000000753">
    <property type="component" value="Chromosome"/>
</dbReference>
<dbReference type="GO" id="GO:0005737">
    <property type="term" value="C:cytoplasm"/>
    <property type="evidence" value="ECO:0007669"/>
    <property type="project" value="UniProtKB-SubCell"/>
</dbReference>
<dbReference type="GO" id="GO:0052914">
    <property type="term" value="F:16S rRNA (guanine(1207)-N(2))-methyltransferase activity"/>
    <property type="evidence" value="ECO:0007669"/>
    <property type="project" value="UniProtKB-EC"/>
</dbReference>
<dbReference type="GO" id="GO:0003676">
    <property type="term" value="F:nucleic acid binding"/>
    <property type="evidence" value="ECO:0007669"/>
    <property type="project" value="InterPro"/>
</dbReference>
<dbReference type="CDD" id="cd02440">
    <property type="entry name" value="AdoMet_MTases"/>
    <property type="match status" value="1"/>
</dbReference>
<dbReference type="Gene3D" id="3.40.50.150">
    <property type="entry name" value="Vaccinia Virus protein VP39"/>
    <property type="match status" value="2"/>
</dbReference>
<dbReference type="HAMAP" id="MF_01862">
    <property type="entry name" value="16SrRNA_methyltr_C"/>
    <property type="match status" value="1"/>
</dbReference>
<dbReference type="InterPro" id="IPR002052">
    <property type="entry name" value="DNA_methylase_N6_adenine_CS"/>
</dbReference>
<dbReference type="InterPro" id="IPR013675">
    <property type="entry name" value="Mtase_sm_N"/>
</dbReference>
<dbReference type="InterPro" id="IPR023543">
    <property type="entry name" value="rRNA_ssu_MeTfrase_C"/>
</dbReference>
<dbReference type="InterPro" id="IPR046977">
    <property type="entry name" value="RsmC/RlmG"/>
</dbReference>
<dbReference type="InterPro" id="IPR029063">
    <property type="entry name" value="SAM-dependent_MTases_sf"/>
</dbReference>
<dbReference type="InterPro" id="IPR007848">
    <property type="entry name" value="Small_mtfrase_dom"/>
</dbReference>
<dbReference type="PANTHER" id="PTHR47816">
    <property type="entry name" value="RIBOSOMAL RNA SMALL SUBUNIT METHYLTRANSFERASE C"/>
    <property type="match status" value="1"/>
</dbReference>
<dbReference type="PANTHER" id="PTHR47816:SF4">
    <property type="entry name" value="RIBOSOMAL RNA SMALL SUBUNIT METHYLTRANSFERASE C"/>
    <property type="match status" value="1"/>
</dbReference>
<dbReference type="Pfam" id="PF05175">
    <property type="entry name" value="MTS"/>
    <property type="match status" value="1"/>
</dbReference>
<dbReference type="Pfam" id="PF08468">
    <property type="entry name" value="MTS_N"/>
    <property type="match status" value="1"/>
</dbReference>
<dbReference type="SUPFAM" id="SSF53335">
    <property type="entry name" value="S-adenosyl-L-methionine-dependent methyltransferases"/>
    <property type="match status" value="1"/>
</dbReference>
<protein>
    <recommendedName>
        <fullName evidence="1">Ribosomal RNA small subunit methyltransferase C</fullName>
        <ecNumber evidence="1">2.1.1.172</ecNumber>
    </recommendedName>
    <alternativeName>
        <fullName evidence="1">16S rRNA m2G1207 methyltransferase</fullName>
    </alternativeName>
    <alternativeName>
        <fullName evidence="1">rRNA (guanine-N(2)-)-methyltransferase RsmC</fullName>
    </alternativeName>
</protein>
<accession>B8CUC9</accession>
<keyword id="KW-0963">Cytoplasm</keyword>
<keyword id="KW-0489">Methyltransferase</keyword>
<keyword id="KW-0698">rRNA processing</keyword>
<keyword id="KW-0949">S-adenosyl-L-methionine</keyword>
<keyword id="KW-0808">Transferase</keyword>
<feature type="chain" id="PRO_0000369776" description="Ribosomal RNA small subunit methyltransferase C">
    <location>
        <begin position="1"/>
        <end position="342"/>
    </location>
</feature>
<evidence type="ECO:0000255" key="1">
    <source>
        <dbReference type="HAMAP-Rule" id="MF_01862"/>
    </source>
</evidence>
<sequence length="342" mass="37515">MLTNASQVLLRNSDLFKDHSVLVLNYEGDTLPKALLESASSVSALALDFHHHLIMQPYAAKNLQLYFGHQLPTQECFDSVIVYFPKAKALAPYLFNLAGKHLKPQGQLIVVGENKGGIKSLPKQLPDYFDKAFKADNARHCIVFTSELNREAPEIKLQDWYSEYQLQTPQGEITICNMVGVFSEKKLDEGTKLLLENLPKMQGNVLDFGCGAGVIAAALLTAQPKLTLDCVDINAMALTSCDLTMQANGLSANIFASDGMAQTSGHYDGIISNPPFHDGLASTTNIATDFVKAASANLMRGGLFHIVANRHLPYSDCIAENFGEVNVSAENNRYKIYSNIKR</sequence>
<gene>
    <name evidence="1" type="primary">rsmC</name>
    <name type="ordered locus">swp_4478</name>
</gene>
<comment type="function">
    <text evidence="1">Specifically methylates the guanine in position 1207 of 16S rRNA in the 30S particle.</text>
</comment>
<comment type="catalytic activity">
    <reaction evidence="1">
        <text>guanosine(1207) in 16S rRNA + S-adenosyl-L-methionine = N(2)-methylguanosine(1207) in 16S rRNA + S-adenosyl-L-homocysteine + H(+)</text>
        <dbReference type="Rhea" id="RHEA:42736"/>
        <dbReference type="Rhea" id="RHEA-COMP:10213"/>
        <dbReference type="Rhea" id="RHEA-COMP:10214"/>
        <dbReference type="ChEBI" id="CHEBI:15378"/>
        <dbReference type="ChEBI" id="CHEBI:57856"/>
        <dbReference type="ChEBI" id="CHEBI:59789"/>
        <dbReference type="ChEBI" id="CHEBI:74269"/>
        <dbReference type="ChEBI" id="CHEBI:74481"/>
        <dbReference type="EC" id="2.1.1.172"/>
    </reaction>
</comment>
<comment type="subunit">
    <text evidence="1">Monomer.</text>
</comment>
<comment type="subcellular location">
    <subcellularLocation>
        <location evidence="1">Cytoplasm</location>
    </subcellularLocation>
</comment>
<comment type="similarity">
    <text evidence="1">Belongs to the methyltransferase superfamily. RsmC family.</text>
</comment>